<dbReference type="EMBL" id="BX248236">
    <property type="status" value="NOT_ANNOTATED_CDS"/>
    <property type="molecule type" value="Genomic_DNA"/>
</dbReference>
<dbReference type="EMBL" id="BC092893">
    <property type="protein sequence ID" value="AAH92893.1"/>
    <property type="molecule type" value="mRNA"/>
</dbReference>
<dbReference type="RefSeq" id="NP_001017786.1">
    <property type="nucleotide sequence ID" value="NM_001017786.1"/>
</dbReference>
<dbReference type="RefSeq" id="XP_017209672.1">
    <property type="nucleotide sequence ID" value="XM_017354183.1"/>
</dbReference>
<dbReference type="RefSeq" id="XP_068073015.1">
    <property type="nucleotide sequence ID" value="XM_068216914.1"/>
</dbReference>
<dbReference type="SMR" id="Q568E2"/>
<dbReference type="FunCoup" id="Q568E2">
    <property type="interactions" value="1066"/>
</dbReference>
<dbReference type="STRING" id="7955.ENSDARP00000131237"/>
<dbReference type="PaxDb" id="7955-ENSDARP00000058642"/>
<dbReference type="Ensembl" id="ENSDART00000160717">
    <property type="protein sequence ID" value="ENSDARP00000131237"/>
    <property type="gene ID" value="ENSDARG00000102267"/>
</dbReference>
<dbReference type="GeneID" id="550483"/>
<dbReference type="KEGG" id="dre:550483"/>
<dbReference type="AGR" id="ZFIN:ZDB-GENE-050417-313"/>
<dbReference type="CTD" id="79755"/>
<dbReference type="ZFIN" id="ZDB-GENE-050417-313">
    <property type="gene designation" value="znf750"/>
</dbReference>
<dbReference type="eggNOG" id="ENOG502QU7X">
    <property type="taxonomic scope" value="Eukaryota"/>
</dbReference>
<dbReference type="HOGENOM" id="CLU_041875_0_0_1"/>
<dbReference type="InParanoid" id="Q568E2"/>
<dbReference type="OMA" id="PSAYDHY"/>
<dbReference type="OrthoDB" id="8933073at2759"/>
<dbReference type="TreeFam" id="TF331381"/>
<dbReference type="PRO" id="PR:Q568E2"/>
<dbReference type="Proteomes" id="UP000000437">
    <property type="component" value="Chromosome 3"/>
</dbReference>
<dbReference type="Bgee" id="ENSDARG00000102267">
    <property type="expression patterns" value="Expressed in zone of skin and 6 other cell types or tissues"/>
</dbReference>
<dbReference type="GO" id="GO:0005634">
    <property type="term" value="C:nucleus"/>
    <property type="evidence" value="ECO:0000250"/>
    <property type="project" value="UniProtKB"/>
</dbReference>
<dbReference type="GO" id="GO:0001228">
    <property type="term" value="F:DNA-binding transcription activator activity, RNA polymerase II-specific"/>
    <property type="evidence" value="ECO:0000250"/>
    <property type="project" value="UniProtKB"/>
</dbReference>
<dbReference type="GO" id="GO:1990841">
    <property type="term" value="F:promoter-specific chromatin binding"/>
    <property type="evidence" value="ECO:0000250"/>
    <property type="project" value="UniProtKB"/>
</dbReference>
<dbReference type="GO" id="GO:0000978">
    <property type="term" value="F:RNA polymerase II cis-regulatory region sequence-specific DNA binding"/>
    <property type="evidence" value="ECO:0000250"/>
    <property type="project" value="UniProtKB"/>
</dbReference>
<dbReference type="GO" id="GO:0008270">
    <property type="term" value="F:zinc ion binding"/>
    <property type="evidence" value="ECO:0007669"/>
    <property type="project" value="UniProtKB-KW"/>
</dbReference>
<dbReference type="GO" id="GO:0030154">
    <property type="term" value="P:cell differentiation"/>
    <property type="evidence" value="ECO:0007669"/>
    <property type="project" value="UniProtKB-KW"/>
</dbReference>
<dbReference type="GO" id="GO:0008544">
    <property type="term" value="P:epidermis development"/>
    <property type="evidence" value="ECO:0000250"/>
    <property type="project" value="UniProtKB"/>
</dbReference>
<dbReference type="GO" id="GO:0045944">
    <property type="term" value="P:positive regulation of transcription by RNA polymerase II"/>
    <property type="evidence" value="ECO:0000250"/>
    <property type="project" value="UniProtKB"/>
</dbReference>
<dbReference type="InterPro" id="IPR039363">
    <property type="entry name" value="ZNF750"/>
</dbReference>
<dbReference type="InterPro" id="IPR039064">
    <property type="entry name" value="ZNF750_Znf"/>
</dbReference>
<dbReference type="PANTHER" id="PTHR14678">
    <property type="entry name" value="PROLINE-RICH PROTEIN 35-RELATED"/>
    <property type="match status" value="1"/>
</dbReference>
<dbReference type="PANTHER" id="PTHR14678:SF1">
    <property type="entry name" value="ZINC FINGER PROTEIN 750"/>
    <property type="match status" value="1"/>
</dbReference>
<dbReference type="Pfam" id="PF15269">
    <property type="entry name" value="zf-C2H2_7"/>
    <property type="match status" value="1"/>
</dbReference>
<comment type="function">
    <text evidence="1">Transcription factor involved in epidermis differentiation.</text>
</comment>
<comment type="subcellular location">
    <subcellularLocation>
        <location evidence="1">Nucleus</location>
    </subcellularLocation>
</comment>
<reference key="1">
    <citation type="journal article" date="2013" name="Nature">
        <title>The zebrafish reference genome sequence and its relationship to the human genome.</title>
        <authorList>
            <person name="Howe K."/>
            <person name="Clark M.D."/>
            <person name="Torroja C.F."/>
            <person name="Torrance J."/>
            <person name="Berthelot C."/>
            <person name="Muffato M."/>
            <person name="Collins J.E."/>
            <person name="Humphray S."/>
            <person name="McLaren K."/>
            <person name="Matthews L."/>
            <person name="McLaren S."/>
            <person name="Sealy I."/>
            <person name="Caccamo M."/>
            <person name="Churcher C."/>
            <person name="Scott C."/>
            <person name="Barrett J.C."/>
            <person name="Koch R."/>
            <person name="Rauch G.J."/>
            <person name="White S."/>
            <person name="Chow W."/>
            <person name="Kilian B."/>
            <person name="Quintais L.T."/>
            <person name="Guerra-Assuncao J.A."/>
            <person name="Zhou Y."/>
            <person name="Gu Y."/>
            <person name="Yen J."/>
            <person name="Vogel J.H."/>
            <person name="Eyre T."/>
            <person name="Redmond S."/>
            <person name="Banerjee R."/>
            <person name="Chi J."/>
            <person name="Fu B."/>
            <person name="Langley E."/>
            <person name="Maguire S.F."/>
            <person name="Laird G.K."/>
            <person name="Lloyd D."/>
            <person name="Kenyon E."/>
            <person name="Donaldson S."/>
            <person name="Sehra H."/>
            <person name="Almeida-King J."/>
            <person name="Loveland J."/>
            <person name="Trevanion S."/>
            <person name="Jones M."/>
            <person name="Quail M."/>
            <person name="Willey D."/>
            <person name="Hunt A."/>
            <person name="Burton J."/>
            <person name="Sims S."/>
            <person name="McLay K."/>
            <person name="Plumb B."/>
            <person name="Davis J."/>
            <person name="Clee C."/>
            <person name="Oliver K."/>
            <person name="Clark R."/>
            <person name="Riddle C."/>
            <person name="Elliot D."/>
            <person name="Threadgold G."/>
            <person name="Harden G."/>
            <person name="Ware D."/>
            <person name="Begum S."/>
            <person name="Mortimore B."/>
            <person name="Kerry G."/>
            <person name="Heath P."/>
            <person name="Phillimore B."/>
            <person name="Tracey A."/>
            <person name="Corby N."/>
            <person name="Dunn M."/>
            <person name="Johnson C."/>
            <person name="Wood J."/>
            <person name="Clark S."/>
            <person name="Pelan S."/>
            <person name="Griffiths G."/>
            <person name="Smith M."/>
            <person name="Glithero R."/>
            <person name="Howden P."/>
            <person name="Barker N."/>
            <person name="Lloyd C."/>
            <person name="Stevens C."/>
            <person name="Harley J."/>
            <person name="Holt K."/>
            <person name="Panagiotidis G."/>
            <person name="Lovell J."/>
            <person name="Beasley H."/>
            <person name="Henderson C."/>
            <person name="Gordon D."/>
            <person name="Auger K."/>
            <person name="Wright D."/>
            <person name="Collins J."/>
            <person name="Raisen C."/>
            <person name="Dyer L."/>
            <person name="Leung K."/>
            <person name="Robertson L."/>
            <person name="Ambridge K."/>
            <person name="Leongamornlert D."/>
            <person name="McGuire S."/>
            <person name="Gilderthorp R."/>
            <person name="Griffiths C."/>
            <person name="Manthravadi D."/>
            <person name="Nichol S."/>
            <person name="Barker G."/>
            <person name="Whitehead S."/>
            <person name="Kay M."/>
            <person name="Brown J."/>
            <person name="Murnane C."/>
            <person name="Gray E."/>
            <person name="Humphries M."/>
            <person name="Sycamore N."/>
            <person name="Barker D."/>
            <person name="Saunders D."/>
            <person name="Wallis J."/>
            <person name="Babbage A."/>
            <person name="Hammond S."/>
            <person name="Mashreghi-Mohammadi M."/>
            <person name="Barr L."/>
            <person name="Martin S."/>
            <person name="Wray P."/>
            <person name="Ellington A."/>
            <person name="Matthews N."/>
            <person name="Ellwood M."/>
            <person name="Woodmansey R."/>
            <person name="Clark G."/>
            <person name="Cooper J."/>
            <person name="Tromans A."/>
            <person name="Grafham D."/>
            <person name="Skuce C."/>
            <person name="Pandian R."/>
            <person name="Andrews R."/>
            <person name="Harrison E."/>
            <person name="Kimberley A."/>
            <person name="Garnett J."/>
            <person name="Fosker N."/>
            <person name="Hall R."/>
            <person name="Garner P."/>
            <person name="Kelly D."/>
            <person name="Bird C."/>
            <person name="Palmer S."/>
            <person name="Gehring I."/>
            <person name="Berger A."/>
            <person name="Dooley C.M."/>
            <person name="Ersan-Urun Z."/>
            <person name="Eser C."/>
            <person name="Geiger H."/>
            <person name="Geisler M."/>
            <person name="Karotki L."/>
            <person name="Kirn A."/>
            <person name="Konantz J."/>
            <person name="Konantz M."/>
            <person name="Oberlander M."/>
            <person name="Rudolph-Geiger S."/>
            <person name="Teucke M."/>
            <person name="Lanz C."/>
            <person name="Raddatz G."/>
            <person name="Osoegawa K."/>
            <person name="Zhu B."/>
            <person name="Rapp A."/>
            <person name="Widaa S."/>
            <person name="Langford C."/>
            <person name="Yang F."/>
            <person name="Schuster S.C."/>
            <person name="Carter N.P."/>
            <person name="Harrow J."/>
            <person name="Ning Z."/>
            <person name="Herrero J."/>
            <person name="Searle S.M."/>
            <person name="Enright A."/>
            <person name="Geisler R."/>
            <person name="Plasterk R.H."/>
            <person name="Lee C."/>
            <person name="Westerfield M."/>
            <person name="de Jong P.J."/>
            <person name="Zon L.I."/>
            <person name="Postlethwait J.H."/>
            <person name="Nusslein-Volhard C."/>
            <person name="Hubbard T.J."/>
            <person name="Roest Crollius H."/>
            <person name="Rogers J."/>
            <person name="Stemple D.L."/>
        </authorList>
    </citation>
    <scope>NUCLEOTIDE SEQUENCE [LARGE SCALE GENOMIC DNA]</scope>
    <source>
        <strain>Tuebingen</strain>
    </source>
</reference>
<reference key="2">
    <citation type="submission" date="2005-04" db="EMBL/GenBank/DDBJ databases">
        <authorList>
            <consortium name="NIH - Zebrafish Gene Collection (ZGC) project"/>
        </authorList>
    </citation>
    <scope>NUCLEOTIDE SEQUENCE [LARGE SCALE MRNA]</scope>
    <source>
        <tissue>Olfactory epithelium</tissue>
    </source>
</reference>
<organism>
    <name type="scientific">Danio rerio</name>
    <name type="common">Zebrafish</name>
    <name type="synonym">Brachydanio rerio</name>
    <dbReference type="NCBI Taxonomy" id="7955"/>
    <lineage>
        <taxon>Eukaryota</taxon>
        <taxon>Metazoa</taxon>
        <taxon>Chordata</taxon>
        <taxon>Craniata</taxon>
        <taxon>Vertebrata</taxon>
        <taxon>Euteleostomi</taxon>
        <taxon>Actinopterygii</taxon>
        <taxon>Neopterygii</taxon>
        <taxon>Teleostei</taxon>
        <taxon>Ostariophysi</taxon>
        <taxon>Cypriniformes</taxon>
        <taxon>Danionidae</taxon>
        <taxon>Danioninae</taxon>
        <taxon>Danio</taxon>
    </lineage>
</organism>
<feature type="chain" id="PRO_0000247072" description="Zinc finger protein 750">
    <location>
        <begin position="1"/>
        <end position="607"/>
    </location>
</feature>
<feature type="zinc finger region" description="CCHC-type" evidence="2">
    <location>
        <begin position="25"/>
        <end position="51"/>
    </location>
</feature>
<feature type="region of interest" description="Disordered" evidence="3">
    <location>
        <begin position="60"/>
        <end position="133"/>
    </location>
</feature>
<feature type="region of interest" description="Disordered" evidence="3">
    <location>
        <begin position="318"/>
        <end position="467"/>
    </location>
</feature>
<feature type="region of interest" description="Disordered" evidence="3">
    <location>
        <begin position="482"/>
        <end position="511"/>
    </location>
</feature>
<feature type="region of interest" description="Disordered" evidence="3">
    <location>
        <begin position="575"/>
        <end position="607"/>
    </location>
</feature>
<feature type="compositionally biased region" description="Polar residues" evidence="3">
    <location>
        <begin position="60"/>
        <end position="78"/>
    </location>
</feature>
<feature type="compositionally biased region" description="Basic and acidic residues" evidence="3">
    <location>
        <begin position="79"/>
        <end position="133"/>
    </location>
</feature>
<feature type="compositionally biased region" description="Basic and acidic residues" evidence="3">
    <location>
        <begin position="318"/>
        <end position="334"/>
    </location>
</feature>
<feature type="compositionally biased region" description="Low complexity" evidence="3">
    <location>
        <begin position="369"/>
        <end position="380"/>
    </location>
</feature>
<feature type="compositionally biased region" description="Acidic residues" evidence="3">
    <location>
        <begin position="421"/>
        <end position="432"/>
    </location>
</feature>
<feature type="compositionally biased region" description="Basic and acidic residues" evidence="3">
    <location>
        <begin position="452"/>
        <end position="462"/>
    </location>
</feature>
<feature type="compositionally biased region" description="Polar residues" evidence="3">
    <location>
        <begin position="496"/>
        <end position="507"/>
    </location>
</feature>
<feature type="compositionally biased region" description="Basic residues" evidence="3">
    <location>
        <begin position="579"/>
        <end position="592"/>
    </location>
</feature>
<feature type="binding site" evidence="2">
    <location>
        <position position="27"/>
    </location>
    <ligand>
        <name>Zn(2+)</name>
        <dbReference type="ChEBI" id="CHEBI:29105"/>
    </ligand>
</feature>
<feature type="binding site" evidence="2">
    <location>
        <position position="30"/>
    </location>
    <ligand>
        <name>Zn(2+)</name>
        <dbReference type="ChEBI" id="CHEBI:29105"/>
    </ligand>
</feature>
<feature type="binding site" evidence="2">
    <location>
        <position position="43"/>
    </location>
    <ligand>
        <name>Zn(2+)</name>
        <dbReference type="ChEBI" id="CHEBI:29105"/>
    </ligand>
</feature>
<feature type="binding site" evidence="2">
    <location>
        <position position="49"/>
    </location>
    <ligand>
        <name>Zn(2+)</name>
        <dbReference type="ChEBI" id="CHEBI:29105"/>
    </ligand>
</feature>
<feature type="sequence conflict" description="In Ref. 2; AAH92893." evidence="4" ref="2">
    <original>H</original>
    <variation>L</variation>
    <location>
        <position position="452"/>
    </location>
</feature>
<feature type="sequence conflict" description="In Ref. 2; AAH92893." evidence="4" ref="2">
    <original>Q</original>
    <variation>R</variation>
    <location>
        <position position="517"/>
    </location>
</feature>
<evidence type="ECO:0000250" key="1"/>
<evidence type="ECO:0000250" key="2">
    <source>
        <dbReference type="UniProtKB" id="Q32MQ0"/>
    </source>
</evidence>
<evidence type="ECO:0000256" key="3">
    <source>
        <dbReference type="SAM" id="MobiDB-lite"/>
    </source>
</evidence>
<evidence type="ECO:0000305" key="4"/>
<proteinExistence type="evidence at transcript level"/>
<gene>
    <name type="primary">znf750</name>
    <name type="ORF">zgc:110351</name>
</gene>
<protein>
    <recommendedName>
        <fullName>Zinc finger protein 750</fullName>
    </recommendedName>
</protein>
<sequence length="607" mass="68135">METLQGRKPKKPHYIPRPPGKPFKYQCFQCPFTCNIKSHLFNHMKYNLCKNSISLVSQRMEQTGKASRASQHSPAFSHNSKELPLDAESTKPIENVKIEKAVTKEAREKPQSPIKEVSKDDTEPALEAKDKSEDMDIAQNKISSAFSPVARTCESEALSLSPHKDDQSTIPHFYQQIAPWVTSASSAHLLPPIPEYPPYMVPERSLPPLYAPYPHNQASTPAYQVTPRETQRPLVPSPLIPPNSSLLHPYHYRYGHSIFPSPPLPYSFYQHPELSIPLQRSRYLPLDVYSSRFYPREYGGHLVPLTHPESYSRLAEDRAVQEHNTGDKGIRESPLEGCDASGSPDRPSTADVTQRIPVGLRLASHGESHSGSQSHIISGSTKANDNLPKMPCGQNQEKMLQKTERYDSQTTISSRSSDISDKEEDEETEEEIGPLNLSKRDQATSNNMTHHHYPDRELHYDSESSQEEAPLNLCLRVQSSNQALPNTSETPEKETISNAEVSTTESPQDLEPCDQRQTAAFALCQLASSRDIINDTSVKQQDVTESQNTKCLPSPDNCSVKDSPNILNASMVALGQKRANNRPLRHTNKRAKVKEPSRPRRKRSQNC</sequence>
<name>ZN750_DANRE</name>
<keyword id="KW-0010">Activator</keyword>
<keyword id="KW-0221">Differentiation</keyword>
<keyword id="KW-0479">Metal-binding</keyword>
<keyword id="KW-0539">Nucleus</keyword>
<keyword id="KW-1185">Reference proteome</keyword>
<keyword id="KW-0804">Transcription</keyword>
<keyword id="KW-0805">Transcription regulation</keyword>
<keyword id="KW-0862">Zinc</keyword>
<keyword id="KW-0863">Zinc-finger</keyword>
<accession>Q568E2</accession>
<accession>F1R5I0</accession>